<organism>
    <name type="scientific">Nitrosospira multiformis (strain ATCC 25196 / NCIMB 11849 / C 71)</name>
    <dbReference type="NCBI Taxonomy" id="323848"/>
    <lineage>
        <taxon>Bacteria</taxon>
        <taxon>Pseudomonadati</taxon>
        <taxon>Pseudomonadota</taxon>
        <taxon>Betaproteobacteria</taxon>
        <taxon>Nitrosomonadales</taxon>
        <taxon>Nitrosomonadaceae</taxon>
        <taxon>Nitrosospira</taxon>
    </lineage>
</organism>
<keyword id="KW-0997">Cell inner membrane</keyword>
<keyword id="KW-1003">Cell membrane</keyword>
<keyword id="KW-0201">Cytochrome c-type biogenesis</keyword>
<keyword id="KW-0349">Heme</keyword>
<keyword id="KW-0408">Iron</keyword>
<keyword id="KW-0472">Membrane</keyword>
<keyword id="KW-0479">Metal-binding</keyword>
<keyword id="KW-1185">Reference proteome</keyword>
<keyword id="KW-0735">Signal-anchor</keyword>
<keyword id="KW-0812">Transmembrane</keyword>
<keyword id="KW-1133">Transmembrane helix</keyword>
<name>CCME_NITMU</name>
<accession>Q2Y9Q8</accession>
<sequence length="148" mass="15755">MKPRHKKLAIIASSVTALGVASVLVLNAFQSNLVFFFSPTQVANNEAPVGKSFRIGGLVEEGSVKRQADGVTVNFLVTDTAKVIPVVYTGILPDLFKEGKGVVAQGKLASDGIFRADEVLAKHDENYMPPEAAGALDQADKARKTVMQ</sequence>
<proteinExistence type="inferred from homology"/>
<feature type="chain" id="PRO_0000238827" description="Cytochrome c-type biogenesis protein CcmE">
    <location>
        <begin position="1"/>
        <end position="148"/>
    </location>
</feature>
<feature type="topological domain" description="Cytoplasmic" evidence="1">
    <location>
        <begin position="1"/>
        <end position="7"/>
    </location>
</feature>
<feature type="transmembrane region" description="Helical; Signal-anchor for type II membrane protein" evidence="1">
    <location>
        <begin position="8"/>
        <end position="28"/>
    </location>
</feature>
<feature type="topological domain" description="Periplasmic" evidence="1">
    <location>
        <begin position="29"/>
        <end position="148"/>
    </location>
</feature>
<feature type="binding site" description="covalent" evidence="1">
    <location>
        <position position="123"/>
    </location>
    <ligand>
        <name>heme</name>
        <dbReference type="ChEBI" id="CHEBI:30413"/>
    </ligand>
</feature>
<feature type="binding site" description="axial binding residue" evidence="1">
    <location>
        <position position="127"/>
    </location>
    <ligand>
        <name>heme</name>
        <dbReference type="ChEBI" id="CHEBI:30413"/>
    </ligand>
    <ligandPart>
        <name>Fe</name>
        <dbReference type="ChEBI" id="CHEBI:18248"/>
    </ligandPart>
</feature>
<comment type="function">
    <text evidence="1">Heme chaperone required for the biogenesis of c-type cytochromes. Transiently binds heme delivered by CcmC and transfers the heme to apo-cytochromes in a process facilitated by CcmF and CcmH.</text>
</comment>
<comment type="subcellular location">
    <subcellularLocation>
        <location evidence="1">Cell inner membrane</location>
        <topology evidence="1">Single-pass type II membrane protein</topology>
        <orientation evidence="1">Periplasmic side</orientation>
    </subcellularLocation>
</comment>
<comment type="similarity">
    <text evidence="1">Belongs to the CcmE/CycJ family.</text>
</comment>
<evidence type="ECO:0000255" key="1">
    <source>
        <dbReference type="HAMAP-Rule" id="MF_01959"/>
    </source>
</evidence>
<dbReference type="EMBL" id="CP000103">
    <property type="protein sequence ID" value="ABB74513.1"/>
    <property type="molecule type" value="Genomic_DNA"/>
</dbReference>
<dbReference type="RefSeq" id="WP_011380554.1">
    <property type="nucleotide sequence ID" value="NC_007614.1"/>
</dbReference>
<dbReference type="SMR" id="Q2Y9Q8"/>
<dbReference type="STRING" id="323848.Nmul_A1210"/>
<dbReference type="KEGG" id="nmu:Nmul_A1210"/>
<dbReference type="eggNOG" id="COG2332">
    <property type="taxonomic scope" value="Bacteria"/>
</dbReference>
<dbReference type="HOGENOM" id="CLU_079503_1_1_4"/>
<dbReference type="OrthoDB" id="9793584at2"/>
<dbReference type="Proteomes" id="UP000002718">
    <property type="component" value="Chromosome"/>
</dbReference>
<dbReference type="GO" id="GO:0005886">
    <property type="term" value="C:plasma membrane"/>
    <property type="evidence" value="ECO:0007669"/>
    <property type="project" value="UniProtKB-SubCell"/>
</dbReference>
<dbReference type="GO" id="GO:0020037">
    <property type="term" value="F:heme binding"/>
    <property type="evidence" value="ECO:0007669"/>
    <property type="project" value="InterPro"/>
</dbReference>
<dbReference type="GO" id="GO:0046872">
    <property type="term" value="F:metal ion binding"/>
    <property type="evidence" value="ECO:0007669"/>
    <property type="project" value="UniProtKB-KW"/>
</dbReference>
<dbReference type="GO" id="GO:0017004">
    <property type="term" value="P:cytochrome complex assembly"/>
    <property type="evidence" value="ECO:0007669"/>
    <property type="project" value="UniProtKB-KW"/>
</dbReference>
<dbReference type="FunFam" id="2.40.50.140:FF:000104">
    <property type="entry name" value="Cytochrome c-type biogenesis protein CcmE"/>
    <property type="match status" value="1"/>
</dbReference>
<dbReference type="Gene3D" id="2.40.50.140">
    <property type="entry name" value="Nucleic acid-binding proteins"/>
    <property type="match status" value="1"/>
</dbReference>
<dbReference type="HAMAP" id="MF_01959">
    <property type="entry name" value="CcmE"/>
    <property type="match status" value="1"/>
</dbReference>
<dbReference type="InterPro" id="IPR004329">
    <property type="entry name" value="CcmE"/>
</dbReference>
<dbReference type="InterPro" id="IPR036127">
    <property type="entry name" value="CcmE-like_sf"/>
</dbReference>
<dbReference type="InterPro" id="IPR012340">
    <property type="entry name" value="NA-bd_OB-fold"/>
</dbReference>
<dbReference type="NCBIfam" id="NF009727">
    <property type="entry name" value="PRK13254.1-1"/>
    <property type="match status" value="1"/>
</dbReference>
<dbReference type="NCBIfam" id="NF009729">
    <property type="entry name" value="PRK13254.1-3"/>
    <property type="match status" value="1"/>
</dbReference>
<dbReference type="NCBIfam" id="NF009731">
    <property type="entry name" value="PRK13254.1-5"/>
    <property type="match status" value="1"/>
</dbReference>
<dbReference type="PANTHER" id="PTHR34128">
    <property type="entry name" value="CYTOCHROME C-TYPE BIOGENESIS PROTEIN CCME HOMOLOG, MITOCHONDRIAL"/>
    <property type="match status" value="1"/>
</dbReference>
<dbReference type="PANTHER" id="PTHR34128:SF2">
    <property type="entry name" value="CYTOCHROME C-TYPE BIOGENESIS PROTEIN CCME HOMOLOG, MITOCHONDRIAL"/>
    <property type="match status" value="1"/>
</dbReference>
<dbReference type="Pfam" id="PF03100">
    <property type="entry name" value="CcmE"/>
    <property type="match status" value="1"/>
</dbReference>
<dbReference type="SUPFAM" id="SSF82093">
    <property type="entry name" value="Heme chaperone CcmE"/>
    <property type="match status" value="1"/>
</dbReference>
<protein>
    <recommendedName>
        <fullName evidence="1">Cytochrome c-type biogenesis protein CcmE</fullName>
    </recommendedName>
    <alternativeName>
        <fullName evidence="1">Cytochrome c maturation protein E</fullName>
    </alternativeName>
    <alternativeName>
        <fullName evidence="1">Heme chaperone CcmE</fullName>
    </alternativeName>
</protein>
<gene>
    <name evidence="1" type="primary">ccmE</name>
    <name evidence="1" type="synonym">cycJ</name>
    <name type="ordered locus">Nmul_A1210</name>
</gene>
<reference key="1">
    <citation type="submission" date="2005-08" db="EMBL/GenBank/DDBJ databases">
        <title>Complete sequence of chromosome 1 of Nitrosospira multiformis ATCC 25196.</title>
        <authorList>
            <person name="Copeland A."/>
            <person name="Lucas S."/>
            <person name="Lapidus A."/>
            <person name="Barry K."/>
            <person name="Detter J.C."/>
            <person name="Glavina T."/>
            <person name="Hammon N."/>
            <person name="Israni S."/>
            <person name="Pitluck S."/>
            <person name="Chain P."/>
            <person name="Malfatti S."/>
            <person name="Shin M."/>
            <person name="Vergez L."/>
            <person name="Schmutz J."/>
            <person name="Larimer F."/>
            <person name="Land M."/>
            <person name="Hauser L."/>
            <person name="Kyrpides N."/>
            <person name="Lykidis A."/>
            <person name="Richardson P."/>
        </authorList>
    </citation>
    <scope>NUCLEOTIDE SEQUENCE [LARGE SCALE GENOMIC DNA]</scope>
    <source>
        <strain>ATCC 25196 / NCIMB 11849 / C 71</strain>
    </source>
</reference>